<proteinExistence type="evidence at protein level"/>
<organism>
    <name type="scientific">Arabidopsis thaliana</name>
    <name type="common">Mouse-ear cress</name>
    <dbReference type="NCBI Taxonomy" id="3702"/>
    <lineage>
        <taxon>Eukaryota</taxon>
        <taxon>Viridiplantae</taxon>
        <taxon>Streptophyta</taxon>
        <taxon>Embryophyta</taxon>
        <taxon>Tracheophyta</taxon>
        <taxon>Spermatophyta</taxon>
        <taxon>Magnoliopsida</taxon>
        <taxon>eudicotyledons</taxon>
        <taxon>Gunneridae</taxon>
        <taxon>Pentapetalae</taxon>
        <taxon>rosids</taxon>
        <taxon>malvids</taxon>
        <taxon>Brassicales</taxon>
        <taxon>Brassicaceae</taxon>
        <taxon>Camelineae</taxon>
        <taxon>Arabidopsis</taxon>
    </lineage>
</organism>
<comment type="function">
    <text evidence="5 6 8 9 10 12">Guanine nucleotide-binding proteins (G proteins) are involved as a modulator or transducer in various transmembrane signaling systems. The beta and gamma chains are required for the GTPase activity, for replacement of GDP by GTP, and for G protein-effector interaction. Involved in the abscisic acid (ABA) and ethylene signaling pathways. Regulates basipetal transport of auxin (IAA) in roots and hypocotyls, and thus modulates root architecture (e.g. lateral root formation). The heterotrimeric G-protein controls defense responses to necrotrophic and vascular fungi probably by modulating cell wall-related genes expression; involved in resistance to Plectosphaerella cucumerina.</text>
</comment>
<comment type="subunit">
    <text evidence="2 3 6 8 11">G proteins are composed of 3 units, alpha, beta and gamma. GPG1 interacts with the beta subunit GB1. The dimer GB1-GG2 interacts with NDL1, NDL2 and NDL3. Binds to NUDT7.</text>
</comment>
<comment type="interaction">
    <interactant intactId="EBI-1751115">
        <id>Q93V47</id>
    </interactant>
    <interactant intactId="EBI-1632851">
        <id>P49177</id>
        <label>GB1</label>
    </interactant>
    <organismsDiffer>false</organismsDiffer>
    <experiments>2</experiments>
</comment>
<comment type="subcellular location">
    <subcellularLocation>
        <location evidence="3 4 11">Cell membrane</location>
    </subcellularLocation>
    <text>Localized to the cell membrane when attached to beta subunit GB1.</text>
</comment>
<comment type="alternative products">
    <event type="alternative splicing"/>
    <isoform>
        <id>Q93V47-1</id>
        <name>1</name>
        <sequence type="displayed"/>
    </isoform>
    <text>Additional isoforms seem to exist.</text>
</comment>
<comment type="tissue specificity">
    <text evidence="2 6 7">Mostly expressed in roots (excluded from the stele), seedlings (especially at the hypocotyl/root junction), floral stems, floral buds, flowers and siliques, and, to a lower extent, in leaves (restricted to guard cells). Also present in hydathods.</text>
</comment>
<comment type="developmental stage">
    <text evidence="6 7">In seedlings, first observed at the hypocotyl/root junction but later confined to the root, including root hairs. In flowers, expressed in the apex of stamen filaments at a very early developmental stage and disappeared before the flower opened. Not present in siliques.</text>
</comment>
<comment type="disruption phenotype">
    <text evidence="6 8 9 10 12">Hypersensitive to auxin-mediated induction of lateral roots, within the epidermis and/or cortex, attenuating basipetally transported auxin and graviresponsiveness. Enhanced sensitivity to glucose. Abnormal roots architecture. Enhanced susceptibility to necrotrophic and vascular pathogenic fungi, such as Plectosphaerella cucumerina associated with a disturbed expression of genes involved in cell wall metabolism (e.g. lower xylose content in cell walls).</text>
</comment>
<sequence>MEAGSSNSSGQLSGRVVDTRGKHRIQAELKRLEQEARFLEEELEQLEKMDNASASCKEFLDSVDSKPDPLLPETTGPVNATWDQWFEGPKEAKRCGCSIL</sequence>
<dbReference type="EMBL" id="AF347077">
    <property type="protein sequence ID" value="AAK71536.1"/>
    <property type="molecule type" value="mRNA"/>
</dbReference>
<dbReference type="EMBL" id="AF347078">
    <property type="protein sequence ID" value="AAK71537.1"/>
    <property type="molecule type" value="Genomic_DNA"/>
</dbReference>
<dbReference type="EMBL" id="AP001300">
    <property type="status" value="NOT_ANNOTATED_CDS"/>
    <property type="molecule type" value="Genomic_DNA"/>
</dbReference>
<dbReference type="EMBL" id="CP002686">
    <property type="protein sequence ID" value="AEE76694.1"/>
    <property type="molecule type" value="Genomic_DNA"/>
</dbReference>
<dbReference type="EMBL" id="BT024657">
    <property type="protein sequence ID" value="ABD57482.1"/>
    <property type="molecule type" value="mRNA"/>
</dbReference>
<dbReference type="EMBL" id="AK228306">
    <property type="protein sequence ID" value="BAF00249.1"/>
    <property type="molecule type" value="mRNA"/>
</dbReference>
<dbReference type="RefSeq" id="NP_850746.1">
    <molecule id="Q93V47-1"/>
    <property type="nucleotide sequence ID" value="NM_180415.3"/>
</dbReference>
<dbReference type="SMR" id="Q93V47"/>
<dbReference type="BioGRID" id="10846">
    <property type="interactions" value="9"/>
</dbReference>
<dbReference type="FunCoup" id="Q93V47">
    <property type="interactions" value="263"/>
</dbReference>
<dbReference type="IntAct" id="Q93V47">
    <property type="interactions" value="2"/>
</dbReference>
<dbReference type="STRING" id="3702.Q93V47"/>
<dbReference type="TCDB" id="8.A.92.1.2">
    <property type="family name" value="the g-protein AlphaBetaGama complex (gpc) family"/>
</dbReference>
<dbReference type="iPTMnet" id="Q93V47"/>
<dbReference type="SwissPalm" id="Q93V47"/>
<dbReference type="PaxDb" id="3702-AT3G22942.1"/>
<dbReference type="ProteomicsDB" id="221832">
    <molecule id="Q93V47-1"/>
</dbReference>
<dbReference type="EnsemblPlants" id="AT3G22942.1">
    <molecule id="Q93V47-1"/>
    <property type="protein sequence ID" value="AT3G22942.1"/>
    <property type="gene ID" value="AT3G22942"/>
</dbReference>
<dbReference type="GeneID" id="825532"/>
<dbReference type="Gramene" id="AT3G22942.1">
    <molecule id="Q93V47-1"/>
    <property type="protein sequence ID" value="AT3G22942.1"/>
    <property type="gene ID" value="AT3G22942"/>
</dbReference>
<dbReference type="KEGG" id="ath:AT3G22942"/>
<dbReference type="Araport" id="AT3G22942"/>
<dbReference type="TAIR" id="AT3G22942">
    <property type="gene designation" value="AGG2"/>
</dbReference>
<dbReference type="eggNOG" id="ENOG502S439">
    <property type="taxonomic scope" value="Eukaryota"/>
</dbReference>
<dbReference type="HOGENOM" id="CLU_105699_2_0_1"/>
<dbReference type="InParanoid" id="Q93V47"/>
<dbReference type="OMA" id="DRWFERP"/>
<dbReference type="OrthoDB" id="1934467at2759"/>
<dbReference type="PhylomeDB" id="Q93V47"/>
<dbReference type="PRO" id="PR:Q93V47"/>
<dbReference type="Proteomes" id="UP000006548">
    <property type="component" value="Chromosome 3"/>
</dbReference>
<dbReference type="ExpressionAtlas" id="Q93V47">
    <property type="expression patterns" value="baseline and differential"/>
</dbReference>
<dbReference type="GO" id="GO:0005834">
    <property type="term" value="C:heterotrimeric G-protein complex"/>
    <property type="evidence" value="ECO:0000314"/>
    <property type="project" value="UniProtKB"/>
</dbReference>
<dbReference type="GO" id="GO:0005886">
    <property type="term" value="C:plasma membrane"/>
    <property type="evidence" value="ECO:0000314"/>
    <property type="project" value="UniProtKB"/>
</dbReference>
<dbReference type="GO" id="GO:0010540">
    <property type="term" value="P:basipetal auxin transport"/>
    <property type="evidence" value="ECO:0000315"/>
    <property type="project" value="TAIR"/>
</dbReference>
<dbReference type="GO" id="GO:0007186">
    <property type="term" value="P:G protein-coupled receptor signaling pathway"/>
    <property type="evidence" value="ECO:0007669"/>
    <property type="project" value="InterPro"/>
</dbReference>
<dbReference type="GO" id="GO:0048527">
    <property type="term" value="P:lateral root development"/>
    <property type="evidence" value="ECO:0000315"/>
    <property type="project" value="TAIR"/>
</dbReference>
<dbReference type="GO" id="GO:0018345">
    <property type="term" value="P:protein palmitoylation"/>
    <property type="evidence" value="ECO:0000315"/>
    <property type="project" value="UniProtKB"/>
</dbReference>
<dbReference type="GO" id="GO:0018342">
    <property type="term" value="P:protein prenylation"/>
    <property type="evidence" value="ECO:0000315"/>
    <property type="project" value="UniProtKB"/>
</dbReference>
<dbReference type="GO" id="GO:0009845">
    <property type="term" value="P:seed germination"/>
    <property type="evidence" value="ECO:0000315"/>
    <property type="project" value="TAIR"/>
</dbReference>
<dbReference type="InterPro" id="IPR015898">
    <property type="entry name" value="G-protein_gamma-like_dom"/>
</dbReference>
<dbReference type="InterPro" id="IPR045878">
    <property type="entry name" value="GG1/2"/>
</dbReference>
<dbReference type="PANTHER" id="PTHR35129">
    <property type="entry name" value="GUANINE NUCLEOTIDE-BINDING PROTEIN SUBUNIT GAMMA 1"/>
    <property type="match status" value="1"/>
</dbReference>
<dbReference type="Pfam" id="PF00631">
    <property type="entry name" value="G-gamma"/>
    <property type="match status" value="1"/>
</dbReference>
<dbReference type="SMART" id="SM01224">
    <property type="entry name" value="G_gamma"/>
    <property type="match status" value="1"/>
</dbReference>
<keyword id="KW-0007">Acetylation</keyword>
<keyword id="KW-0025">Alternative splicing</keyword>
<keyword id="KW-1003">Cell membrane</keyword>
<keyword id="KW-0175">Coiled coil</keyword>
<keyword id="KW-0449">Lipoprotein</keyword>
<keyword id="KW-0472">Membrane</keyword>
<keyword id="KW-0488">Methylation</keyword>
<keyword id="KW-0564">Palmitate</keyword>
<keyword id="KW-0636">Prenylation</keyword>
<keyword id="KW-1185">Reference proteome</keyword>
<keyword id="KW-0807">Transducer</keyword>
<evidence type="ECO:0000255" key="1"/>
<evidence type="ECO:0000269" key="2">
    <source>
    </source>
</evidence>
<evidence type="ECO:0000269" key="3">
    <source>
    </source>
</evidence>
<evidence type="ECO:0000269" key="4">
    <source>
    </source>
</evidence>
<evidence type="ECO:0000269" key="5">
    <source>
    </source>
</evidence>
<evidence type="ECO:0000269" key="6">
    <source>
    </source>
</evidence>
<evidence type="ECO:0000269" key="7">
    <source>
    </source>
</evidence>
<evidence type="ECO:0000269" key="8">
    <source>
    </source>
</evidence>
<evidence type="ECO:0000269" key="9">
    <source>
    </source>
</evidence>
<evidence type="ECO:0000269" key="10">
    <source>
    </source>
</evidence>
<evidence type="ECO:0000269" key="11">
    <source>
    </source>
</evidence>
<evidence type="ECO:0000269" key="12">
    <source>
    </source>
</evidence>
<evidence type="ECO:0000305" key="13"/>
<evidence type="ECO:0007744" key="14">
    <source>
    </source>
</evidence>
<feature type="chain" id="PRO_0000419815" description="Guanine nucleotide-binding protein subunit gamma 2">
    <location>
        <begin position="1"/>
        <end position="97"/>
    </location>
</feature>
<feature type="propeptide" id="PRO_0000419816" description="Removed in mature form">
    <location>
        <begin position="98"/>
        <end position="100"/>
    </location>
</feature>
<feature type="domain" description="G protein gamma">
    <location>
        <begin position="21"/>
        <end position="100"/>
    </location>
</feature>
<feature type="region of interest" description="Regulates lipidation and cell membrane subcellular localization">
    <location>
        <begin position="90"/>
        <end position="96"/>
    </location>
</feature>
<feature type="coiled-coil region" evidence="1">
    <location>
        <begin position="19"/>
        <end position="55"/>
    </location>
</feature>
<feature type="modified residue" description="N-acetylmethionine" evidence="14">
    <location>
        <position position="1"/>
    </location>
</feature>
<feature type="modified residue" description="Cysteine methyl ester" evidence="13">
    <location>
        <position position="97"/>
    </location>
</feature>
<feature type="lipid moiety-binding region" description="S-palmitoyl cysteine" evidence="3 4">
    <location>
        <position position="95"/>
    </location>
</feature>
<feature type="lipid moiety-binding region" description="S-farnesyl cysteine" evidence="4">
    <location>
        <position position="97"/>
    </location>
</feature>
<feature type="mutagenesis site" description="Golgi and other internal membranes subcellular localization, probably by reduced lipidation." evidence="4">
    <original>KEAKRCG</original>
    <variation>NGGEGCR</variation>
    <location>
        <begin position="90"/>
        <end position="96"/>
    </location>
</feature>
<feature type="mutagenesis site" description="Loss of cell membrane attachment leading to Golgi and other internal membranes subcellular localization." evidence="3 4">
    <original>C</original>
    <variation>S</variation>
    <location>
        <position position="95"/>
    </location>
</feature>
<feature type="mutagenesis site" description="No prenylation and loss of cell membrane attachment leading to cytoplasmic subcellular localization." evidence="4">
    <original>C</original>
    <variation>S</variation>
    <location>
        <position position="97"/>
    </location>
</feature>
<feature type="mutagenesis site" description="Loss of cell membrane attachment leading to cytoplasmic subcellular localization." evidence="3">
    <original>L</original>
    <variation>LTEFNH</variation>
    <location>
        <position position="100"/>
    </location>
</feature>
<gene>
    <name type="primary">GG2</name>
    <name type="synonym">AGG2</name>
    <name type="ordered locus">At3g22942</name>
    <name type="ORF">F5N5</name>
</gene>
<protein>
    <recommendedName>
        <fullName>Guanine nucleotide-binding protein subunit gamma 2</fullName>
    </recommendedName>
    <alternativeName>
        <fullName>Ggamma-subunit 2</fullName>
    </alternativeName>
    <alternativeName>
        <fullName>Heterotrimeric G protein gamma-subunit 2</fullName>
        <shortName>AtAGG2</shortName>
    </alternativeName>
</protein>
<accession>Q93V47</accession>
<reference key="1">
    <citation type="journal article" date="2001" name="Biochim. Biophys. Acta">
        <title>Isolation of a novel G-protein gamma-subunit from Arabidopsis thaliana and its interaction with Gbeta.</title>
        <authorList>
            <person name="Mason M.G."/>
            <person name="Botella J.R."/>
        </authorList>
    </citation>
    <scope>NUCLEOTIDE SEQUENCE [GENOMIC DNA / MRNA]</scope>
    <scope>INTERACTION WITH GB1</scope>
    <scope>TISSUE SPECIFICITY</scope>
    <scope>ALTERNATIVE SPLICING</scope>
    <source>
        <strain>cv. Columbia</strain>
    </source>
</reference>
<reference key="2">
    <citation type="journal article" date="2000" name="DNA Res.">
        <title>Structural analysis of Arabidopsis thaliana chromosome 3. II. Sequence features of the 4,251,695 bp regions covered by 90 P1, TAC and BAC clones.</title>
        <authorList>
            <person name="Kaneko T."/>
            <person name="Katoh T."/>
            <person name="Sato S."/>
            <person name="Nakamura Y."/>
            <person name="Asamizu E."/>
            <person name="Tabata S."/>
        </authorList>
    </citation>
    <scope>NUCLEOTIDE SEQUENCE [LARGE SCALE GENOMIC DNA]</scope>
    <source>
        <strain>cv. Columbia</strain>
    </source>
</reference>
<reference key="3">
    <citation type="journal article" date="2017" name="Plant J.">
        <title>Araport11: a complete reannotation of the Arabidopsis thaliana reference genome.</title>
        <authorList>
            <person name="Cheng C.Y."/>
            <person name="Krishnakumar V."/>
            <person name="Chan A.P."/>
            <person name="Thibaud-Nissen F."/>
            <person name="Schobel S."/>
            <person name="Town C.D."/>
        </authorList>
    </citation>
    <scope>GENOME REANNOTATION</scope>
    <source>
        <strain>cv. Columbia</strain>
    </source>
</reference>
<reference key="4">
    <citation type="submission" date="2006-02" db="EMBL/GenBank/DDBJ databases">
        <title>Arabidopsis ORF clones.</title>
        <authorList>
            <person name="Shinn P."/>
            <person name="Chen H."/>
            <person name="Kim C.J."/>
            <person name="Ecker J.R."/>
        </authorList>
    </citation>
    <scope>NUCLEOTIDE SEQUENCE [LARGE SCALE MRNA]</scope>
    <source>
        <strain>cv. Columbia</strain>
    </source>
</reference>
<reference key="5">
    <citation type="submission" date="2006-07" db="EMBL/GenBank/DDBJ databases">
        <title>Large-scale analysis of RIKEN Arabidopsis full-length (RAFL) cDNAs.</title>
        <authorList>
            <person name="Totoki Y."/>
            <person name="Seki M."/>
            <person name="Ishida J."/>
            <person name="Nakajima M."/>
            <person name="Enju A."/>
            <person name="Kamiya A."/>
            <person name="Narusaka M."/>
            <person name="Shin-i T."/>
            <person name="Nakagawa M."/>
            <person name="Sakamoto N."/>
            <person name="Oishi K."/>
            <person name="Kohara Y."/>
            <person name="Kobayashi M."/>
            <person name="Toyoda A."/>
            <person name="Sakaki Y."/>
            <person name="Sakurai T."/>
            <person name="Iida K."/>
            <person name="Akiyama K."/>
            <person name="Satou M."/>
            <person name="Toyoda T."/>
            <person name="Konagaya A."/>
            <person name="Carninci P."/>
            <person name="Kawai J."/>
            <person name="Hayashizaki Y."/>
            <person name="Shinozaki K."/>
        </authorList>
    </citation>
    <scope>NUCLEOTIDE SEQUENCE [LARGE SCALE MRNA]</scope>
    <source>
        <strain>cv. Columbia</strain>
    </source>
</reference>
<reference key="6">
    <citation type="journal article" date="2006" name="J. Cell Sci.">
        <title>Plant G protein heterotrimers require dual lipidation motifs of Galpha and Ggamma and do not dissociate upon activation.</title>
        <authorList>
            <person name="Adjobo-Hermans M.J.W."/>
            <person name="Goedhart J."/>
            <person name="Gadella T.W.J. Jr."/>
        </authorList>
    </citation>
    <scope>SUBUNIT</scope>
    <scope>PALMITOYLATION AT CYS-95</scope>
    <scope>SUBCELLULAR LOCATION</scope>
    <scope>INTERACTION WITH GB1</scope>
    <scope>MUTAGENESIS OF CYS-95 AND LEU-100</scope>
</reference>
<reference key="7">
    <citation type="journal article" date="2007" name="Gene">
        <title>Over-expression of a truncated Arabidopsis thaliana heterotrimeric G protein gamma subunit results in a phenotype similar to alpha and beta subunit knockouts.</title>
        <authorList>
            <person name="Chakravorty D."/>
            <person name="Botella J.R."/>
        </authorList>
    </citation>
    <scope>FUNCTION</scope>
    <source>
        <strain>cv. Columbia</strain>
    </source>
</reference>
<reference key="8">
    <citation type="journal article" date="2007" name="Plant Cell">
        <title>Heterotrimeric G protein gamma subunits provide functional selectivity in Gbetagamma dimer signaling in Arabidopsis.</title>
        <authorList>
            <person name="Trusov Y."/>
            <person name="Rookes J.E."/>
            <person name="Tilbrook K."/>
            <person name="Chakravorty D."/>
            <person name="Mason M.G."/>
            <person name="Anderson D."/>
            <person name="Chen J.-G."/>
            <person name="Jones A.M."/>
            <person name="Botella J.R."/>
        </authorList>
    </citation>
    <scope>FUNCTION</scope>
    <scope>DISRUPTION PHENOTYPE</scope>
    <scope>SUBUNIT</scope>
    <scope>TISSUE SPECIFICITY</scope>
    <scope>DEVELOPMENTAL STAGE</scope>
    <source>
        <strain>cv. Columbia</strain>
    </source>
</reference>
<reference key="9">
    <citation type="journal article" date="2007" name="Plant Physiol.">
        <title>Dual lipid modification of Arabidopsis Ggamma-subunits is required for efficient plasma membrane targeting.</title>
        <authorList>
            <person name="Zeng Q."/>
            <person name="Wang X."/>
            <person name="Running M.P."/>
        </authorList>
    </citation>
    <scope>SUBCELLULAR LOCATION</scope>
    <scope>PALMITOYLATION AT CYS-95</scope>
    <scope>ISOPRENYLATION AT CYS-97</scope>
    <scope>MUTAGENESIS OF 90-LYS--GLY-96; CYS-95 AND CYS-97</scope>
</reference>
<reference key="10">
    <citation type="journal article" date="2008" name="Plant Physiol.">
        <title>Ggamma1 + Ggamma2 not equal to Gbeta: heterotrimeric G protein Ggamma-deficient mutants do not recapitulate all phenotypes of Gbeta-deficient mutants.</title>
        <authorList>
            <person name="Trusov Y."/>
            <person name="Zhang W."/>
            <person name="Assmann S.M."/>
            <person name="Botella J.R."/>
        </authorList>
    </citation>
    <scope>TISSUE SPECIFICITY</scope>
    <scope>DEVELOPMENTAL STAGE</scope>
    <source>
        <strain>cv. Columbia</strain>
    </source>
</reference>
<reference key="11">
    <citation type="journal article" date="2009" name="Plant Cell">
        <title>Arabidopsis N-MYC DOWNREGULATED-LIKE1, a positive regulator of auxin transport in a G protein-mediated pathway.</title>
        <authorList>
            <person name="Mudgil Y."/>
            <person name="Uhrig J.F."/>
            <person name="Zhou J."/>
            <person name="Temple B."/>
            <person name="Jiang K."/>
            <person name="Jones A.M."/>
        </authorList>
    </citation>
    <scope>FUNCTION</scope>
    <scope>DISRUPTION PHENOTYPE</scope>
    <scope>INTERACTION WITH NDL1; NDL2 AND NDL3</scope>
    <source>
        <strain>cv. Columbia</strain>
    </source>
</reference>
<reference key="12">
    <citation type="journal article" date="2010" name="PLoS ONE">
        <title>Glucose attenuation of auxin-mediated bimodality in lateral root formation is partly coupled by the heterotrimeric G protein complex.</title>
        <authorList>
            <person name="Booker K.S."/>
            <person name="Schwarz J."/>
            <person name="Garrett M.B."/>
            <person name="Jones A.M."/>
        </authorList>
    </citation>
    <scope>FUNCTION</scope>
    <scope>DISRUPTION PHENOTYPE</scope>
</reference>
<reference key="13">
    <citation type="journal article" date="2011" name="Acta Biochim. Pol.">
        <title>Arabidopsis thaliana Nudix hydrolase AtNUDT7 forms complexes with the regulatory RACK1A protein and Ggamma subunits of the signal transducing heterotrimeric G protein.</title>
        <authorList>
            <person name="Olejnik K."/>
            <person name="Bucholc M."/>
            <person name="Anielska-Mazur A."/>
            <person name="Lipko A."/>
            <person name="Kujawa M."/>
            <person name="Modzelan M."/>
            <person name="Augustyn A."/>
            <person name="Kraszewska E."/>
        </authorList>
    </citation>
    <scope>INTERACTION WITH NUDT7</scope>
    <scope>SUBCELLULAR LOCATION</scope>
</reference>
<reference key="14">
    <citation type="journal article" date="2012" name="J. Plant Physiol.">
        <title>Ggamma1+Ggamma2+Ggamma3=Gbeta: the search for heterotrimeric G-protein gamma subunits in Arabidopsis is over.</title>
        <authorList>
            <person name="Thung L."/>
            <person name="Trusov Y."/>
            <person name="Chakravorty D."/>
            <person name="Botella J.R."/>
        </authorList>
    </citation>
    <scope>FUNCTION</scope>
    <scope>DISRUPTION PHENOTYPE</scope>
    <source>
        <strain>cv. Columbia</strain>
    </source>
</reference>
<reference key="15">
    <citation type="journal article" date="2012" name="Mol. Cell. Proteomics">
        <title>Comparative large-scale characterisation of plant vs. mammal proteins reveals similar and idiosyncratic N-alpha acetylation features.</title>
        <authorList>
            <person name="Bienvenut W.V."/>
            <person name="Sumpton D."/>
            <person name="Martinez A."/>
            <person name="Lilla S."/>
            <person name="Espagne C."/>
            <person name="Meinnel T."/>
            <person name="Giglione C."/>
        </authorList>
    </citation>
    <scope>ACETYLATION [LARGE SCALE ANALYSIS] AT MET-1</scope>
    <scope>IDENTIFICATION BY MASS SPECTROMETRY [LARGE SCALE ANALYSIS]</scope>
</reference>
<reference key="16">
    <citation type="journal article" date="2012" name="Mol. Plant">
        <title>Arabidopsis heterotrimeric G-protein regulates cell wall defense and resistance to necrotrophic fungi.</title>
        <authorList>
            <person name="Delgado-Cerezo M."/>
            <person name="Sanchez-Rodriguez C."/>
            <person name="Escudero V."/>
            <person name="Miedes E."/>
            <person name="Fernandez P.V."/>
            <person name="Jorda L."/>
            <person name="Hernandez-Blanco C."/>
            <person name="Sanchez-Vallet A."/>
            <person name="Bednarek P."/>
            <person name="Schulze-Lefert P."/>
            <person name="Somerville S."/>
            <person name="Estevez J.M."/>
            <person name="Persson S."/>
            <person name="Molina A."/>
        </authorList>
    </citation>
    <scope>FUNCTION</scope>
    <scope>DISRUPTION PHENOTYPE</scope>
    <source>
        <strain>cv. Columbia</strain>
    </source>
</reference>
<name>GG2_ARATH</name>